<feature type="chain" id="PRO_0000318932" description="WASH complex subunit 5">
    <location>
        <begin position="1"/>
        <end position="1159"/>
    </location>
</feature>
<reference key="1">
    <citation type="submission" date="2004-06" db="EMBL/GenBank/DDBJ databases">
        <authorList>
            <consortium name="NIH - Xenopus Gene Collection (XGC) project"/>
        </authorList>
    </citation>
    <scope>NUCLEOTIDE SEQUENCE [LARGE SCALE MRNA]</scope>
    <source>
        <tissue>Embryo</tissue>
    </source>
</reference>
<organism>
    <name type="scientific">Xenopus tropicalis</name>
    <name type="common">Western clawed frog</name>
    <name type="synonym">Silurana tropicalis</name>
    <dbReference type="NCBI Taxonomy" id="8364"/>
    <lineage>
        <taxon>Eukaryota</taxon>
        <taxon>Metazoa</taxon>
        <taxon>Chordata</taxon>
        <taxon>Craniata</taxon>
        <taxon>Vertebrata</taxon>
        <taxon>Euteleostomi</taxon>
        <taxon>Amphibia</taxon>
        <taxon>Batrachia</taxon>
        <taxon>Anura</taxon>
        <taxon>Pipoidea</taxon>
        <taxon>Pipidae</taxon>
        <taxon>Xenopodinae</taxon>
        <taxon>Xenopus</taxon>
        <taxon>Silurana</taxon>
    </lineage>
</organism>
<evidence type="ECO:0000250" key="1">
    <source>
        <dbReference type="UniProtKB" id="Q12768"/>
    </source>
</evidence>
<evidence type="ECO:0000305" key="2"/>
<protein>
    <recommendedName>
        <fullName evidence="1">WASH complex subunit 5</fullName>
    </recommendedName>
    <alternativeName>
        <fullName evidence="2">WASH complex subunit strumpellin</fullName>
    </alternativeName>
</protein>
<comment type="function">
    <text evidence="1">Acts at least in part as component of the WASH complex which seems to regulate washc1 nucleation-promoting factor (NPF) activity and is required for its membrane targeting during endosomal sorting.</text>
</comment>
<comment type="subunit">
    <text evidence="1">Component of the WASH complex.</text>
</comment>
<comment type="subcellular location">
    <subcellularLocation>
        <location evidence="2">Early endosome</location>
    </subcellularLocation>
</comment>
<comment type="similarity">
    <text evidence="2">Belongs to the strumpellin family.</text>
</comment>
<accession>Q6DIP9</accession>
<proteinExistence type="evidence at transcript level"/>
<keyword id="KW-0967">Endosome</keyword>
<keyword id="KW-0653">Protein transport</keyword>
<keyword id="KW-1185">Reference proteome</keyword>
<keyword id="KW-0813">Transport</keyword>
<gene>
    <name evidence="1" type="primary">washc5</name>
</gene>
<dbReference type="EMBL" id="BC075486">
    <property type="protein sequence ID" value="AAH75486.1"/>
    <property type="molecule type" value="mRNA"/>
</dbReference>
<dbReference type="RefSeq" id="NP_001004970.1">
    <property type="nucleotide sequence ID" value="NM_001004970.1"/>
</dbReference>
<dbReference type="FunCoup" id="Q6DIP9">
    <property type="interactions" value="3284"/>
</dbReference>
<dbReference type="STRING" id="8364.ENSXETP00000054061"/>
<dbReference type="PaxDb" id="8364-ENSXETP00000038004"/>
<dbReference type="GeneID" id="448397"/>
<dbReference type="KEGG" id="xtr:448397"/>
<dbReference type="AGR" id="Xenbase:XB-GENE-5781989"/>
<dbReference type="CTD" id="9897"/>
<dbReference type="Xenbase" id="XB-GENE-5781989">
    <property type="gene designation" value="washc5"/>
</dbReference>
<dbReference type="eggNOG" id="KOG3666">
    <property type="taxonomic scope" value="Eukaryota"/>
</dbReference>
<dbReference type="InParanoid" id="Q6DIP9"/>
<dbReference type="OrthoDB" id="565118at2759"/>
<dbReference type="Proteomes" id="UP000008143">
    <property type="component" value="Chromosome 6"/>
</dbReference>
<dbReference type="GO" id="GO:0005769">
    <property type="term" value="C:early endosome"/>
    <property type="evidence" value="ECO:0007669"/>
    <property type="project" value="UniProtKB-SubCell"/>
</dbReference>
<dbReference type="GO" id="GO:0071203">
    <property type="term" value="C:WASH complex"/>
    <property type="evidence" value="ECO:0000250"/>
    <property type="project" value="UniProtKB"/>
</dbReference>
<dbReference type="GO" id="GO:0015031">
    <property type="term" value="P:protein transport"/>
    <property type="evidence" value="ECO:0007669"/>
    <property type="project" value="UniProtKB-KW"/>
</dbReference>
<dbReference type="InterPro" id="IPR019393">
    <property type="entry name" value="WASH_strumpellin"/>
</dbReference>
<dbReference type="PANTHER" id="PTHR15691">
    <property type="entry name" value="WASH COMPLEX SUBUNIT 5"/>
    <property type="match status" value="1"/>
</dbReference>
<dbReference type="PANTHER" id="PTHR15691:SF6">
    <property type="entry name" value="WASH COMPLEX SUBUNIT 5"/>
    <property type="match status" value="1"/>
</dbReference>
<dbReference type="Pfam" id="PF10266">
    <property type="entry name" value="Strumpellin"/>
    <property type="match status" value="1"/>
</dbReference>
<name>WASC5_XENTR</name>
<sequence>MVDFLAENNLCGQAILRIVSRGNAIIAELLRLSEFVPSVFRLKDKADQQKYGDIIFDFSYFKGPEVCEGRLEAKPELQDLDEEFRENNIEILTRFYLAFESVHKYIVDLNRYLEDLNEGIYIQQTLETVLLNEDGKQLLCEALYLYGVMLLVIDQKIEGEVRERMLVAYYRYSAARSSVDSNMDDICKLLRSTGYSSQPGAKRPPNYPESYFSRVPISETFISMVIGRLRSDDIYNQVSAYPLPEHRSTALATQAAILYVILYFHPPTLHTHQAKMREIVDKYFPDNWVISIYMGITVNLMEVWEPYKAAKTALNYTLDLPNIKEQASRYAKIIESLHPQVQQFLKEGFLREEFVLDNIPKLLNCLRDCNVAIRWLMLHTADSAYDPNNKRLRQVKDQVLADSKYNPKILFQLLLDTAQFEFLLKEMFKQMLSEKQNKWESYKKEGSERMTELADVFSGVKPLTRVEKNEHLQAWFREIAKQIHSLNYDDSTAAGRKTVQLIQALEEVQEFHQLETNLQVCQFLADTRKFLHQMIRTINIKEEVLITMQIVGDLSYAWQLIDSFTAIMQESIRANPSMVTKLRATFLKLASALDLPLLRINQANSPDLLSVSQYYSGELVFYVRKVLQIIPESMFTSLAKIIKLQTHDIIEVPTRLDKDKLRDYAQLGARYEVAKLTNAISIFTEGILMMKTTLVGIIKVDPKQLLEDGIRKELVKRVAVALHKGLIFNSRAKPSELLPKLKDMAATMDGFHRSFEYIQDYVSIYGLKIWQEEVSRIVNYNVEQECNNFLRTKIQDWQSMYQSTHIPIPKFPPVDESMTFIGRLCREILRITDPKVTCYIDQMNTWYDMKTHQEVTNNHLFSEINDSLGTFGLNGLDRLLCFMIVKELQNFIRLYQRLILRDKSGQETLRALQKVVTPVKGIVANSAKIYSAAIAKTQKIWPAYLDAIMKVGQMQVLRQQIANELNYSCKFDSKHLAGALENFNEAILADIQAHYQDPSLPCPREDNTLLYEITAYLEAAGTHNPLNKIYITTKQLSFFPIVNFLFLVAQLPKLQYNKNLGMTCRKPADPIDWVPLVLGLLTLLKQFHSRYTEQFLALIGQFIRSSLEQSTSQKIPEMPADVVGALMFLEDYVHFAKLPRRVVEAHVPNFIFDEFRTIQ</sequence>